<reference key="1">
    <citation type="journal article" date="2006" name="Lancet">
        <title>Complete genome sequence of USA300, an epidemic clone of community-acquired meticillin-resistant Staphylococcus aureus.</title>
        <authorList>
            <person name="Diep B.A."/>
            <person name="Gill S.R."/>
            <person name="Chang R.F."/>
            <person name="Phan T.H."/>
            <person name="Chen J.H."/>
            <person name="Davidson M.G."/>
            <person name="Lin F."/>
            <person name="Lin J."/>
            <person name="Carleton H.A."/>
            <person name="Mongodin E.F."/>
            <person name="Sensabaugh G.F."/>
            <person name="Perdreau-Remington F."/>
        </authorList>
    </citation>
    <scope>NUCLEOTIDE SEQUENCE [LARGE SCALE GENOMIC DNA]</scope>
    <source>
        <strain>USA300</strain>
    </source>
</reference>
<sequence>MAREFSLEKTRNIGIMAHIDAGKTTTTERILYYTGRIHKIGETHEGASQMDWMEQEQDRGITITSAATTAAWEGHRVNIIDTPGHVDFTVEVERSLRVLDGAVTVLDAQSGVEPQTETVWRQATTYGVPRIVFVNKMDKLGANFEYSVSTLHDRLQANAAPIQLPIGAEDEFEAIIDLVEMKCFKYTNDLGTEIEEIEIPEDHLDRAEEARASLIEAVAETSDELMEKYLGDEEISVSELKEAIRQATTNVEFYPVLCGTAFKNKGVQLMLDAVIDYLPSPLDVKPIIGHRASNPEEEVIAKADDSAEFAALAFKVMTDPYVGKLTFFRVYSGTMTSGSYVKNSTKGKRERVGRLLQMHANSRQEIDTVYSGDIAAAVGLKDTGTGDTLCGEKNDIILESMEFPEPVIHLSVEPKSKADQDKMTQALVKLQEEDPTFHAHTDEETGQVIIGGMGELHLDILVDRMKKEFNVECNVGAPMVSYRETFKSSAQVQGKFSRQSGGRGQYGDVHIEFTPNETGAGFEFENAIVGGVVPREYIPSVEAGLKDAMENGVLAGYPLIDVKAKLYDGSYHDVDSSEMAFKIAASLALKEAAKKCDPVILEPMMKVTIEMPEEYMGDIMGDVTSRRGRVDGMEPRGNAQVVNAYVPLSEMFGYATSLRSNTQGRGTYTMYFDHYAEVPKSIAEDIIKKNKGE</sequence>
<proteinExistence type="inferred from homology"/>
<gene>
    <name evidence="2" type="primary">fusA</name>
    <name type="ordered locus">SAUSA300_0532</name>
</gene>
<dbReference type="EMBL" id="CP000255">
    <property type="protein sequence ID" value="ABD22238.1"/>
    <property type="molecule type" value="Genomic_DNA"/>
</dbReference>
<dbReference type="SMR" id="Q2FJ93"/>
<dbReference type="KEGG" id="saa:SAUSA300_0532"/>
<dbReference type="HOGENOM" id="CLU_002794_4_1_9"/>
<dbReference type="Proteomes" id="UP000001939">
    <property type="component" value="Chromosome"/>
</dbReference>
<dbReference type="GO" id="GO:0005737">
    <property type="term" value="C:cytoplasm"/>
    <property type="evidence" value="ECO:0007669"/>
    <property type="project" value="UniProtKB-SubCell"/>
</dbReference>
<dbReference type="GO" id="GO:0005525">
    <property type="term" value="F:GTP binding"/>
    <property type="evidence" value="ECO:0007669"/>
    <property type="project" value="UniProtKB-UniRule"/>
</dbReference>
<dbReference type="GO" id="GO:0003924">
    <property type="term" value="F:GTPase activity"/>
    <property type="evidence" value="ECO:0007669"/>
    <property type="project" value="InterPro"/>
</dbReference>
<dbReference type="GO" id="GO:0003746">
    <property type="term" value="F:translation elongation factor activity"/>
    <property type="evidence" value="ECO:0007669"/>
    <property type="project" value="UniProtKB-UniRule"/>
</dbReference>
<dbReference type="GO" id="GO:0032790">
    <property type="term" value="P:ribosome disassembly"/>
    <property type="evidence" value="ECO:0007669"/>
    <property type="project" value="TreeGrafter"/>
</dbReference>
<dbReference type="CDD" id="cd01886">
    <property type="entry name" value="EF-G"/>
    <property type="match status" value="1"/>
</dbReference>
<dbReference type="CDD" id="cd16262">
    <property type="entry name" value="EFG_III"/>
    <property type="match status" value="1"/>
</dbReference>
<dbReference type="CDD" id="cd01434">
    <property type="entry name" value="EFG_mtEFG1_IV"/>
    <property type="match status" value="1"/>
</dbReference>
<dbReference type="CDD" id="cd03713">
    <property type="entry name" value="EFG_mtEFG_C"/>
    <property type="match status" value="1"/>
</dbReference>
<dbReference type="CDD" id="cd04088">
    <property type="entry name" value="EFG_mtEFG_II"/>
    <property type="match status" value="1"/>
</dbReference>
<dbReference type="FunFam" id="2.40.30.10:FF:000006">
    <property type="entry name" value="Elongation factor G"/>
    <property type="match status" value="1"/>
</dbReference>
<dbReference type="FunFam" id="3.30.230.10:FF:000003">
    <property type="entry name" value="Elongation factor G"/>
    <property type="match status" value="1"/>
</dbReference>
<dbReference type="FunFam" id="3.30.70.240:FF:000001">
    <property type="entry name" value="Elongation factor G"/>
    <property type="match status" value="1"/>
</dbReference>
<dbReference type="FunFam" id="3.30.70.870:FF:000001">
    <property type="entry name" value="Elongation factor G"/>
    <property type="match status" value="1"/>
</dbReference>
<dbReference type="FunFam" id="3.40.50.300:FF:000029">
    <property type="entry name" value="Elongation factor G"/>
    <property type="match status" value="1"/>
</dbReference>
<dbReference type="Gene3D" id="3.30.230.10">
    <property type="match status" value="1"/>
</dbReference>
<dbReference type="Gene3D" id="3.30.70.240">
    <property type="match status" value="1"/>
</dbReference>
<dbReference type="Gene3D" id="3.30.70.870">
    <property type="entry name" value="Elongation Factor G (Translational Gtpase), domain 3"/>
    <property type="match status" value="1"/>
</dbReference>
<dbReference type="Gene3D" id="3.40.50.300">
    <property type="entry name" value="P-loop containing nucleotide triphosphate hydrolases"/>
    <property type="match status" value="1"/>
</dbReference>
<dbReference type="Gene3D" id="2.40.30.10">
    <property type="entry name" value="Translation factors"/>
    <property type="match status" value="1"/>
</dbReference>
<dbReference type="HAMAP" id="MF_00054_B">
    <property type="entry name" value="EF_G_EF_2_B"/>
    <property type="match status" value="1"/>
</dbReference>
<dbReference type="InterPro" id="IPR041095">
    <property type="entry name" value="EFG_II"/>
</dbReference>
<dbReference type="InterPro" id="IPR009022">
    <property type="entry name" value="EFG_III"/>
</dbReference>
<dbReference type="InterPro" id="IPR035647">
    <property type="entry name" value="EFG_III/V"/>
</dbReference>
<dbReference type="InterPro" id="IPR047872">
    <property type="entry name" value="EFG_IV"/>
</dbReference>
<dbReference type="InterPro" id="IPR035649">
    <property type="entry name" value="EFG_V"/>
</dbReference>
<dbReference type="InterPro" id="IPR000640">
    <property type="entry name" value="EFG_V-like"/>
</dbReference>
<dbReference type="InterPro" id="IPR004161">
    <property type="entry name" value="EFTu-like_2"/>
</dbReference>
<dbReference type="InterPro" id="IPR031157">
    <property type="entry name" value="G_TR_CS"/>
</dbReference>
<dbReference type="InterPro" id="IPR027417">
    <property type="entry name" value="P-loop_NTPase"/>
</dbReference>
<dbReference type="InterPro" id="IPR020568">
    <property type="entry name" value="Ribosomal_Su5_D2-typ_SF"/>
</dbReference>
<dbReference type="InterPro" id="IPR014721">
    <property type="entry name" value="Ribsml_uS5_D2-typ_fold_subgr"/>
</dbReference>
<dbReference type="InterPro" id="IPR005225">
    <property type="entry name" value="Small_GTP-bd"/>
</dbReference>
<dbReference type="InterPro" id="IPR000795">
    <property type="entry name" value="T_Tr_GTP-bd_dom"/>
</dbReference>
<dbReference type="InterPro" id="IPR009000">
    <property type="entry name" value="Transl_B-barrel_sf"/>
</dbReference>
<dbReference type="InterPro" id="IPR004540">
    <property type="entry name" value="Transl_elong_EFG/EF2"/>
</dbReference>
<dbReference type="InterPro" id="IPR005517">
    <property type="entry name" value="Transl_elong_EFG/EF2_IV"/>
</dbReference>
<dbReference type="NCBIfam" id="TIGR00484">
    <property type="entry name" value="EF-G"/>
    <property type="match status" value="1"/>
</dbReference>
<dbReference type="NCBIfam" id="NF009379">
    <property type="entry name" value="PRK12740.1-3"/>
    <property type="match status" value="1"/>
</dbReference>
<dbReference type="NCBIfam" id="NF009381">
    <property type="entry name" value="PRK12740.1-5"/>
    <property type="match status" value="1"/>
</dbReference>
<dbReference type="NCBIfam" id="TIGR00231">
    <property type="entry name" value="small_GTP"/>
    <property type="match status" value="1"/>
</dbReference>
<dbReference type="PANTHER" id="PTHR43261:SF1">
    <property type="entry name" value="RIBOSOME-RELEASING FACTOR 2, MITOCHONDRIAL"/>
    <property type="match status" value="1"/>
</dbReference>
<dbReference type="PANTHER" id="PTHR43261">
    <property type="entry name" value="TRANSLATION ELONGATION FACTOR G-RELATED"/>
    <property type="match status" value="1"/>
</dbReference>
<dbReference type="Pfam" id="PF00679">
    <property type="entry name" value="EFG_C"/>
    <property type="match status" value="1"/>
</dbReference>
<dbReference type="Pfam" id="PF14492">
    <property type="entry name" value="EFG_III"/>
    <property type="match status" value="1"/>
</dbReference>
<dbReference type="Pfam" id="PF03764">
    <property type="entry name" value="EFG_IV"/>
    <property type="match status" value="1"/>
</dbReference>
<dbReference type="Pfam" id="PF00009">
    <property type="entry name" value="GTP_EFTU"/>
    <property type="match status" value="1"/>
</dbReference>
<dbReference type="Pfam" id="PF03144">
    <property type="entry name" value="GTP_EFTU_D2"/>
    <property type="match status" value="1"/>
</dbReference>
<dbReference type="PRINTS" id="PR00315">
    <property type="entry name" value="ELONGATNFCT"/>
</dbReference>
<dbReference type="SMART" id="SM00838">
    <property type="entry name" value="EFG_C"/>
    <property type="match status" value="1"/>
</dbReference>
<dbReference type="SMART" id="SM00889">
    <property type="entry name" value="EFG_IV"/>
    <property type="match status" value="1"/>
</dbReference>
<dbReference type="SUPFAM" id="SSF54980">
    <property type="entry name" value="EF-G C-terminal domain-like"/>
    <property type="match status" value="2"/>
</dbReference>
<dbReference type="SUPFAM" id="SSF52540">
    <property type="entry name" value="P-loop containing nucleoside triphosphate hydrolases"/>
    <property type="match status" value="1"/>
</dbReference>
<dbReference type="SUPFAM" id="SSF54211">
    <property type="entry name" value="Ribosomal protein S5 domain 2-like"/>
    <property type="match status" value="1"/>
</dbReference>
<dbReference type="SUPFAM" id="SSF50447">
    <property type="entry name" value="Translation proteins"/>
    <property type="match status" value="1"/>
</dbReference>
<dbReference type="PROSITE" id="PS00301">
    <property type="entry name" value="G_TR_1"/>
    <property type="match status" value="1"/>
</dbReference>
<dbReference type="PROSITE" id="PS51722">
    <property type="entry name" value="G_TR_2"/>
    <property type="match status" value="1"/>
</dbReference>
<evidence type="ECO:0000250" key="1"/>
<evidence type="ECO:0000255" key="2">
    <source>
        <dbReference type="HAMAP-Rule" id="MF_00054"/>
    </source>
</evidence>
<protein>
    <recommendedName>
        <fullName evidence="2">Elongation factor G</fullName>
        <shortName evidence="2">EF-G</shortName>
    </recommendedName>
</protein>
<organism>
    <name type="scientific">Staphylococcus aureus (strain USA300)</name>
    <dbReference type="NCBI Taxonomy" id="367830"/>
    <lineage>
        <taxon>Bacteria</taxon>
        <taxon>Bacillati</taxon>
        <taxon>Bacillota</taxon>
        <taxon>Bacilli</taxon>
        <taxon>Bacillales</taxon>
        <taxon>Staphylococcaceae</taxon>
        <taxon>Staphylococcus</taxon>
    </lineage>
</organism>
<comment type="function">
    <text evidence="2">Catalyzes the GTP-dependent ribosomal translocation step during translation elongation. During this step, the ribosome changes from the pre-translocational (PRE) to the post-translocational (POST) state as the newly formed A-site-bound peptidyl-tRNA and P-site-bound deacylated tRNA move to the P and E sites, respectively. Catalyzes the coordinated movement of the two tRNA molecules, the mRNA and conformational changes in the ribosome.</text>
</comment>
<comment type="subcellular location">
    <subcellularLocation>
        <location evidence="2">Cytoplasm</location>
    </subcellularLocation>
</comment>
<comment type="similarity">
    <text evidence="2">Belongs to the TRAFAC class translation factor GTPase superfamily. Classic translation factor GTPase family. EF-G/EF-2 subfamily.</text>
</comment>
<feature type="initiator methionine" description="Removed" evidence="1">
    <location>
        <position position="1"/>
    </location>
</feature>
<feature type="chain" id="PRO_0000263516" description="Elongation factor G">
    <location>
        <begin position="2"/>
        <end position="693"/>
    </location>
</feature>
<feature type="domain" description="tr-type G">
    <location>
        <begin position="8"/>
        <end position="282"/>
    </location>
</feature>
<feature type="binding site" evidence="2">
    <location>
        <begin position="17"/>
        <end position="24"/>
    </location>
    <ligand>
        <name>GTP</name>
        <dbReference type="ChEBI" id="CHEBI:37565"/>
    </ligand>
</feature>
<feature type="binding site" evidence="2">
    <location>
        <begin position="81"/>
        <end position="85"/>
    </location>
    <ligand>
        <name>GTP</name>
        <dbReference type="ChEBI" id="CHEBI:37565"/>
    </ligand>
</feature>
<feature type="binding site" evidence="2">
    <location>
        <begin position="135"/>
        <end position="138"/>
    </location>
    <ligand>
        <name>GTP</name>
        <dbReference type="ChEBI" id="CHEBI:37565"/>
    </ligand>
</feature>
<name>EFG_STAA3</name>
<keyword id="KW-0963">Cytoplasm</keyword>
<keyword id="KW-0251">Elongation factor</keyword>
<keyword id="KW-0342">GTP-binding</keyword>
<keyword id="KW-0547">Nucleotide-binding</keyword>
<keyword id="KW-0648">Protein biosynthesis</keyword>
<accession>Q2FJ93</accession>